<sequence>MSLNPRDVVIVDFGRTPMGRSKGGMHRNTRAEDMSAHLISKLLERNNKVDPAEVEDVIWGCVNQTLEQGWNIARMASLLTQIPHTSAAQTVSRLCGSSMSALHTAAQAIMTNNGDVFVIGGVEHMGHVSMMHGVDPNPHMSLHAAKASGMMGLTAEMLGKMHGITREQQDAFGLRSHQLAHKATLEGKFKDEIIPMQGYDENGFLKVFDYDETIRPDTTLESLAALKPAFNPKGGTVTAGTSSQITDGASCMIVMSAQRAQDLGIQPLAVIRSMAVAGVDPAIMGYGPVPATQKALKRAGLTIADIDFIELNEAFAAQALPVLKDLKVLDKMNEKVNLHGGAIALGHPFGCSGARISGTLLNVMKQNGGTFGVSTMCIGLGQGIATVFERV</sequence>
<accession>Q48GW4</accession>
<feature type="chain" id="PRO_0000206384" description="3-ketoacyl-CoA thiolase">
    <location>
        <begin position="1"/>
        <end position="391"/>
    </location>
</feature>
<feature type="active site" description="Acyl-thioester intermediate" evidence="1">
    <location>
        <position position="95"/>
    </location>
</feature>
<feature type="active site" description="Proton acceptor" evidence="1">
    <location>
        <position position="347"/>
    </location>
</feature>
<feature type="active site" description="Proton acceptor" evidence="1">
    <location>
        <position position="377"/>
    </location>
</feature>
<dbReference type="EC" id="2.3.1.16" evidence="1"/>
<dbReference type="EMBL" id="CP000058">
    <property type="protein sequence ID" value="AAZ36601.1"/>
    <property type="molecule type" value="Genomic_DNA"/>
</dbReference>
<dbReference type="RefSeq" id="WP_004656895.1">
    <property type="nucleotide sequence ID" value="NC_005773.3"/>
</dbReference>
<dbReference type="SMR" id="Q48GW4"/>
<dbReference type="GeneID" id="69860235"/>
<dbReference type="KEGG" id="psp:PSPPH_3209"/>
<dbReference type="eggNOG" id="COG0183">
    <property type="taxonomic scope" value="Bacteria"/>
</dbReference>
<dbReference type="HOGENOM" id="CLU_031026_2_2_6"/>
<dbReference type="UniPathway" id="UPA00659"/>
<dbReference type="Proteomes" id="UP000000551">
    <property type="component" value="Chromosome"/>
</dbReference>
<dbReference type="GO" id="GO:0005737">
    <property type="term" value="C:cytoplasm"/>
    <property type="evidence" value="ECO:0007669"/>
    <property type="project" value="UniProtKB-SubCell"/>
</dbReference>
<dbReference type="GO" id="GO:0003988">
    <property type="term" value="F:acetyl-CoA C-acyltransferase activity"/>
    <property type="evidence" value="ECO:0007669"/>
    <property type="project" value="UniProtKB-UniRule"/>
</dbReference>
<dbReference type="GO" id="GO:0006635">
    <property type="term" value="P:fatty acid beta-oxidation"/>
    <property type="evidence" value="ECO:0007669"/>
    <property type="project" value="UniProtKB-UniRule"/>
</dbReference>
<dbReference type="GO" id="GO:0010124">
    <property type="term" value="P:phenylacetate catabolic process"/>
    <property type="evidence" value="ECO:0007669"/>
    <property type="project" value="TreeGrafter"/>
</dbReference>
<dbReference type="CDD" id="cd00751">
    <property type="entry name" value="thiolase"/>
    <property type="match status" value="1"/>
</dbReference>
<dbReference type="FunFam" id="3.40.47.10:FF:000010">
    <property type="entry name" value="Acetyl-CoA acetyltransferase (Thiolase)"/>
    <property type="match status" value="1"/>
</dbReference>
<dbReference type="Gene3D" id="3.40.47.10">
    <property type="match status" value="2"/>
</dbReference>
<dbReference type="HAMAP" id="MF_01620">
    <property type="entry name" value="FadA"/>
    <property type="match status" value="1"/>
</dbReference>
<dbReference type="InterPro" id="IPR012805">
    <property type="entry name" value="FadA"/>
</dbReference>
<dbReference type="InterPro" id="IPR002155">
    <property type="entry name" value="Thiolase"/>
</dbReference>
<dbReference type="InterPro" id="IPR016039">
    <property type="entry name" value="Thiolase-like"/>
</dbReference>
<dbReference type="InterPro" id="IPR050215">
    <property type="entry name" value="Thiolase-like_sf_Thiolase"/>
</dbReference>
<dbReference type="InterPro" id="IPR020615">
    <property type="entry name" value="Thiolase_acyl_enz_int_AS"/>
</dbReference>
<dbReference type="InterPro" id="IPR020610">
    <property type="entry name" value="Thiolase_AS"/>
</dbReference>
<dbReference type="InterPro" id="IPR020617">
    <property type="entry name" value="Thiolase_C"/>
</dbReference>
<dbReference type="InterPro" id="IPR020613">
    <property type="entry name" value="Thiolase_CS"/>
</dbReference>
<dbReference type="InterPro" id="IPR020616">
    <property type="entry name" value="Thiolase_N"/>
</dbReference>
<dbReference type="NCBIfam" id="TIGR01930">
    <property type="entry name" value="AcCoA-C-Actrans"/>
    <property type="match status" value="1"/>
</dbReference>
<dbReference type="NCBIfam" id="TIGR02445">
    <property type="entry name" value="fadA"/>
    <property type="match status" value="1"/>
</dbReference>
<dbReference type="NCBIfam" id="NF006510">
    <property type="entry name" value="PRK08947.1"/>
    <property type="match status" value="1"/>
</dbReference>
<dbReference type="PANTHER" id="PTHR43853:SF11">
    <property type="entry name" value="3-KETOACYL-COA THIOLASE FADA"/>
    <property type="match status" value="1"/>
</dbReference>
<dbReference type="PANTHER" id="PTHR43853">
    <property type="entry name" value="3-KETOACYL-COA THIOLASE, PEROXISOMAL"/>
    <property type="match status" value="1"/>
</dbReference>
<dbReference type="Pfam" id="PF02803">
    <property type="entry name" value="Thiolase_C"/>
    <property type="match status" value="1"/>
</dbReference>
<dbReference type="Pfam" id="PF00108">
    <property type="entry name" value="Thiolase_N"/>
    <property type="match status" value="1"/>
</dbReference>
<dbReference type="PIRSF" id="PIRSF000429">
    <property type="entry name" value="Ac-CoA_Ac_transf"/>
    <property type="match status" value="1"/>
</dbReference>
<dbReference type="SUPFAM" id="SSF53901">
    <property type="entry name" value="Thiolase-like"/>
    <property type="match status" value="2"/>
</dbReference>
<dbReference type="PROSITE" id="PS00098">
    <property type="entry name" value="THIOLASE_1"/>
    <property type="match status" value="1"/>
</dbReference>
<dbReference type="PROSITE" id="PS00737">
    <property type="entry name" value="THIOLASE_2"/>
    <property type="match status" value="1"/>
</dbReference>
<dbReference type="PROSITE" id="PS00099">
    <property type="entry name" value="THIOLASE_3"/>
    <property type="match status" value="1"/>
</dbReference>
<comment type="function">
    <text evidence="1">Catalyzes the final step of fatty acid oxidation in which acetyl-CoA is released and the CoA ester of a fatty acid two carbons shorter is formed.</text>
</comment>
<comment type="catalytic activity">
    <reaction evidence="1">
        <text>an acyl-CoA + acetyl-CoA = a 3-oxoacyl-CoA + CoA</text>
        <dbReference type="Rhea" id="RHEA:21564"/>
        <dbReference type="ChEBI" id="CHEBI:57287"/>
        <dbReference type="ChEBI" id="CHEBI:57288"/>
        <dbReference type="ChEBI" id="CHEBI:58342"/>
        <dbReference type="ChEBI" id="CHEBI:90726"/>
        <dbReference type="EC" id="2.3.1.16"/>
    </reaction>
</comment>
<comment type="pathway">
    <text evidence="1">Lipid metabolism; fatty acid beta-oxidation.</text>
</comment>
<comment type="subunit">
    <text evidence="1">Heterotetramer of two alpha chains (FadB) and two beta chains (FadA).</text>
</comment>
<comment type="subcellular location">
    <subcellularLocation>
        <location evidence="1">Cytoplasm</location>
    </subcellularLocation>
</comment>
<comment type="similarity">
    <text evidence="1">Belongs to the thiolase-like superfamily. Thiolase family.</text>
</comment>
<reference key="1">
    <citation type="journal article" date="2005" name="J. Bacteriol.">
        <title>Whole-genome sequence analysis of Pseudomonas syringae pv. phaseolicola 1448A reveals divergence among pathovars in genes involved in virulence and transposition.</title>
        <authorList>
            <person name="Joardar V."/>
            <person name="Lindeberg M."/>
            <person name="Jackson R.W."/>
            <person name="Selengut J."/>
            <person name="Dodson R."/>
            <person name="Brinkac L.M."/>
            <person name="Daugherty S.C."/>
            <person name="DeBoy R.T."/>
            <person name="Durkin A.S."/>
            <person name="Gwinn Giglio M."/>
            <person name="Madupu R."/>
            <person name="Nelson W.C."/>
            <person name="Rosovitz M.J."/>
            <person name="Sullivan S.A."/>
            <person name="Crabtree J."/>
            <person name="Creasy T."/>
            <person name="Davidsen T.M."/>
            <person name="Haft D.H."/>
            <person name="Zafar N."/>
            <person name="Zhou L."/>
            <person name="Halpin R."/>
            <person name="Holley T."/>
            <person name="Khouri H.M."/>
            <person name="Feldblyum T.V."/>
            <person name="White O."/>
            <person name="Fraser C.M."/>
            <person name="Chatterjee A.K."/>
            <person name="Cartinhour S."/>
            <person name="Schneider D."/>
            <person name="Mansfield J.W."/>
            <person name="Collmer A."/>
            <person name="Buell R."/>
        </authorList>
    </citation>
    <scope>NUCLEOTIDE SEQUENCE [LARGE SCALE GENOMIC DNA]</scope>
    <source>
        <strain>1448A / Race 6</strain>
    </source>
</reference>
<protein>
    <recommendedName>
        <fullName evidence="1">3-ketoacyl-CoA thiolase</fullName>
        <ecNumber evidence="1">2.3.1.16</ecNumber>
    </recommendedName>
    <alternativeName>
        <fullName evidence="1">Acetyl-CoA acyltransferase</fullName>
    </alternativeName>
    <alternativeName>
        <fullName evidence="1">Beta-ketothiolase</fullName>
    </alternativeName>
    <alternativeName>
        <fullName evidence="1">Fatty acid oxidation complex subunit beta</fullName>
    </alternativeName>
</protein>
<organism>
    <name type="scientific">Pseudomonas savastanoi pv. phaseolicola (strain 1448A / Race 6)</name>
    <name type="common">Pseudomonas syringae pv. phaseolicola (strain 1448A / Race 6)</name>
    <dbReference type="NCBI Taxonomy" id="264730"/>
    <lineage>
        <taxon>Bacteria</taxon>
        <taxon>Pseudomonadati</taxon>
        <taxon>Pseudomonadota</taxon>
        <taxon>Gammaproteobacteria</taxon>
        <taxon>Pseudomonadales</taxon>
        <taxon>Pseudomonadaceae</taxon>
        <taxon>Pseudomonas</taxon>
    </lineage>
</organism>
<keyword id="KW-0012">Acyltransferase</keyword>
<keyword id="KW-0963">Cytoplasm</keyword>
<keyword id="KW-0276">Fatty acid metabolism</keyword>
<keyword id="KW-0442">Lipid degradation</keyword>
<keyword id="KW-0443">Lipid metabolism</keyword>
<keyword id="KW-0808">Transferase</keyword>
<gene>
    <name evidence="1" type="primary">fadA</name>
    <name type="ordered locus">PSPPH_3209</name>
</gene>
<proteinExistence type="inferred from homology"/>
<name>FADA_PSE14</name>
<evidence type="ECO:0000255" key="1">
    <source>
        <dbReference type="HAMAP-Rule" id="MF_01620"/>
    </source>
</evidence>